<sequence length="138" mass="15346">MRTLWIVAVCLMGVEGHLTQFGDMINKKTGTFGLLSYVYYGCYCGLGGKGKPQDATDRCCFVHDCCYGTVNGCDPKLSTYSYSFQNGDIVCGDDDPCLRAVCECDRVAAICFGENMNTYDTKYMLHSLFDCMEESEKC</sequence>
<comment type="function">
    <text evidence="1">Snake venom phospholipase A2 (PLA2) that is not toxic by itself, but the synergistical mixture of a basic and this acidic protein is lethal. PLA2 catalyzes the calcium-dependent hydrolysis of the 2-acyl groups in 3-sn-phosphoglycerides (By similarity).</text>
</comment>
<comment type="catalytic activity">
    <reaction evidence="2 3">
        <text>a 1,2-diacyl-sn-glycero-3-phosphocholine + H2O = a 1-acyl-sn-glycero-3-phosphocholine + a fatty acid + H(+)</text>
        <dbReference type="Rhea" id="RHEA:15801"/>
        <dbReference type="ChEBI" id="CHEBI:15377"/>
        <dbReference type="ChEBI" id="CHEBI:15378"/>
        <dbReference type="ChEBI" id="CHEBI:28868"/>
        <dbReference type="ChEBI" id="CHEBI:57643"/>
        <dbReference type="ChEBI" id="CHEBI:58168"/>
        <dbReference type="EC" id="3.1.1.4"/>
    </reaction>
</comment>
<comment type="cofactor">
    <cofactor evidence="1">
        <name>Ca(2+)</name>
        <dbReference type="ChEBI" id="CHEBI:29108"/>
    </cofactor>
    <text evidence="1">Binds 1 Ca(2+) ion.</text>
</comment>
<comment type="subunit">
    <text evidence="1">Does not form a complex.</text>
</comment>
<comment type="subcellular location">
    <subcellularLocation>
        <location evidence="1">Secreted</location>
    </subcellularLocation>
</comment>
<comment type="tissue specificity">
    <text>Expressed by the venom gland.</text>
</comment>
<comment type="similarity">
    <text evidence="4">Belongs to the phospholipase A2 family. Group II subfamily. D49 sub-subfamily.</text>
</comment>
<proteinExistence type="inferred from homology"/>
<keyword id="KW-0106">Calcium</keyword>
<keyword id="KW-1015">Disulfide bond</keyword>
<keyword id="KW-0378">Hydrolase</keyword>
<keyword id="KW-0442">Lipid degradation</keyword>
<keyword id="KW-0443">Lipid metabolism</keyword>
<keyword id="KW-0479">Metal-binding</keyword>
<keyword id="KW-0964">Secreted</keyword>
<keyword id="KW-0732">Signal</keyword>
<keyword id="KW-0800">Toxin</keyword>
<evidence type="ECO:0000250" key="1"/>
<evidence type="ECO:0000255" key="2">
    <source>
        <dbReference type="PROSITE-ProRule" id="PRU10035"/>
    </source>
</evidence>
<evidence type="ECO:0000255" key="3">
    <source>
        <dbReference type="PROSITE-ProRule" id="PRU10036"/>
    </source>
</evidence>
<evidence type="ECO:0000305" key="4"/>
<accession>Q9PWR6</accession>
<reference key="1">
    <citation type="journal article" date="1998" name="Biochem. Biophys. Res. Commun.">
        <title>Positive darwinian selection in Vipera palaestinae phospholipase A2 genes is unexpectedly limited to the third exon.</title>
        <authorList>
            <person name="Kordis D."/>
            <person name="Bdolah A."/>
            <person name="Gubensek F."/>
        </authorList>
    </citation>
    <scope>NUCLEOTIDE SEQUENCE [GENOMIC DNA]</scope>
    <source>
        <tissue>Liver</tissue>
    </source>
</reference>
<name>PA2A7_DABPA</name>
<organism>
    <name type="scientific">Daboia palaestinae</name>
    <name type="common">Palestine viper</name>
    <name type="synonym">Vipera palaestinae</name>
    <dbReference type="NCBI Taxonomy" id="1170828"/>
    <lineage>
        <taxon>Eukaryota</taxon>
        <taxon>Metazoa</taxon>
        <taxon>Chordata</taxon>
        <taxon>Craniata</taxon>
        <taxon>Vertebrata</taxon>
        <taxon>Euteleostomi</taxon>
        <taxon>Lepidosauria</taxon>
        <taxon>Squamata</taxon>
        <taxon>Bifurcata</taxon>
        <taxon>Unidentata</taxon>
        <taxon>Episquamata</taxon>
        <taxon>Toxicofera</taxon>
        <taxon>Serpentes</taxon>
        <taxon>Colubroidea</taxon>
        <taxon>Viperidae</taxon>
        <taxon>Viperinae</taxon>
        <taxon>Daboia</taxon>
    </lineage>
</organism>
<protein>
    <recommendedName>
        <fullName>Acidic phospholipase A2 VP7</fullName>
        <shortName>svPLA2</shortName>
        <ecNumber>3.1.1.4</ecNumber>
    </recommendedName>
    <alternativeName>
        <fullName>Phosphatidylcholine 2-acylhydrolase</fullName>
    </alternativeName>
</protein>
<dbReference type="EC" id="3.1.1.4"/>
<dbReference type="EMBL" id="AF091855">
    <property type="protein sequence ID" value="AAC78085.1"/>
    <property type="molecule type" value="Genomic_DNA"/>
</dbReference>
<dbReference type="SMR" id="Q9PWR6"/>
<dbReference type="GO" id="GO:0005576">
    <property type="term" value="C:extracellular region"/>
    <property type="evidence" value="ECO:0007669"/>
    <property type="project" value="UniProtKB-SubCell"/>
</dbReference>
<dbReference type="GO" id="GO:0005509">
    <property type="term" value="F:calcium ion binding"/>
    <property type="evidence" value="ECO:0007669"/>
    <property type="project" value="InterPro"/>
</dbReference>
<dbReference type="GO" id="GO:0047498">
    <property type="term" value="F:calcium-dependent phospholipase A2 activity"/>
    <property type="evidence" value="ECO:0007669"/>
    <property type="project" value="TreeGrafter"/>
</dbReference>
<dbReference type="GO" id="GO:0005543">
    <property type="term" value="F:phospholipid binding"/>
    <property type="evidence" value="ECO:0007669"/>
    <property type="project" value="TreeGrafter"/>
</dbReference>
<dbReference type="GO" id="GO:0090729">
    <property type="term" value="F:toxin activity"/>
    <property type="evidence" value="ECO:0007669"/>
    <property type="project" value="UniProtKB-KW"/>
</dbReference>
<dbReference type="GO" id="GO:0050482">
    <property type="term" value="P:arachidonate secretion"/>
    <property type="evidence" value="ECO:0007669"/>
    <property type="project" value="InterPro"/>
</dbReference>
<dbReference type="GO" id="GO:0016042">
    <property type="term" value="P:lipid catabolic process"/>
    <property type="evidence" value="ECO:0007669"/>
    <property type="project" value="UniProtKB-KW"/>
</dbReference>
<dbReference type="GO" id="GO:0006644">
    <property type="term" value="P:phospholipid metabolic process"/>
    <property type="evidence" value="ECO:0007669"/>
    <property type="project" value="InterPro"/>
</dbReference>
<dbReference type="CDD" id="cd00125">
    <property type="entry name" value="PLA2c"/>
    <property type="match status" value="1"/>
</dbReference>
<dbReference type="FunFam" id="1.20.90.10:FF:000001">
    <property type="entry name" value="Basic phospholipase A2 homolog"/>
    <property type="match status" value="1"/>
</dbReference>
<dbReference type="Gene3D" id="1.20.90.10">
    <property type="entry name" value="Phospholipase A2 domain"/>
    <property type="match status" value="1"/>
</dbReference>
<dbReference type="InterPro" id="IPR001211">
    <property type="entry name" value="PLipase_A2"/>
</dbReference>
<dbReference type="InterPro" id="IPR033112">
    <property type="entry name" value="PLipase_A2_Asp_AS"/>
</dbReference>
<dbReference type="InterPro" id="IPR016090">
    <property type="entry name" value="PLipase_A2_dom"/>
</dbReference>
<dbReference type="InterPro" id="IPR036444">
    <property type="entry name" value="PLipase_A2_dom_sf"/>
</dbReference>
<dbReference type="InterPro" id="IPR033113">
    <property type="entry name" value="PLipase_A2_His_AS"/>
</dbReference>
<dbReference type="PANTHER" id="PTHR11716:SF101">
    <property type="entry name" value="BASIC PHOSPHOLIPASE A2 PA-11-LIKE"/>
    <property type="match status" value="1"/>
</dbReference>
<dbReference type="PANTHER" id="PTHR11716">
    <property type="entry name" value="PHOSPHOLIPASE A2 FAMILY MEMBER"/>
    <property type="match status" value="1"/>
</dbReference>
<dbReference type="Pfam" id="PF00068">
    <property type="entry name" value="Phospholip_A2_1"/>
    <property type="match status" value="1"/>
</dbReference>
<dbReference type="PRINTS" id="PR00389">
    <property type="entry name" value="PHPHLIPASEA2"/>
</dbReference>
<dbReference type="SMART" id="SM00085">
    <property type="entry name" value="PA2c"/>
    <property type="match status" value="1"/>
</dbReference>
<dbReference type="SUPFAM" id="SSF48619">
    <property type="entry name" value="Phospholipase A2, PLA2"/>
    <property type="match status" value="1"/>
</dbReference>
<dbReference type="PROSITE" id="PS00119">
    <property type="entry name" value="PA2_ASP"/>
    <property type="match status" value="1"/>
</dbReference>
<dbReference type="PROSITE" id="PS00118">
    <property type="entry name" value="PA2_HIS"/>
    <property type="match status" value="1"/>
</dbReference>
<feature type="signal peptide" evidence="1">
    <location>
        <begin position="1"/>
        <end position="16"/>
    </location>
</feature>
<feature type="chain" id="PRO_0000022980" description="Acidic phospholipase A2 VP7">
    <location>
        <begin position="17"/>
        <end position="138"/>
    </location>
</feature>
<feature type="active site" evidence="1">
    <location>
        <position position="63"/>
    </location>
</feature>
<feature type="active site" evidence="1">
    <location>
        <position position="105"/>
    </location>
</feature>
<feature type="binding site" evidence="1">
    <location>
        <position position="43"/>
    </location>
    <ligand>
        <name>Ca(2+)</name>
        <dbReference type="ChEBI" id="CHEBI:29108"/>
    </ligand>
</feature>
<feature type="binding site" evidence="1">
    <location>
        <position position="45"/>
    </location>
    <ligand>
        <name>Ca(2+)</name>
        <dbReference type="ChEBI" id="CHEBI:29108"/>
    </ligand>
</feature>
<feature type="binding site" evidence="1">
    <location>
        <position position="47"/>
    </location>
    <ligand>
        <name>Ca(2+)</name>
        <dbReference type="ChEBI" id="CHEBI:29108"/>
    </ligand>
</feature>
<feature type="binding site" evidence="1">
    <location>
        <position position="64"/>
    </location>
    <ligand>
        <name>Ca(2+)</name>
        <dbReference type="ChEBI" id="CHEBI:29108"/>
    </ligand>
</feature>
<feature type="disulfide bond" evidence="1">
    <location>
        <begin position="42"/>
        <end position="131"/>
    </location>
</feature>
<feature type="disulfide bond" evidence="1">
    <location>
        <begin position="44"/>
        <end position="60"/>
    </location>
</feature>
<feature type="disulfide bond" evidence="1">
    <location>
        <begin position="59"/>
        <end position="111"/>
    </location>
</feature>
<feature type="disulfide bond" evidence="1">
    <location>
        <begin position="65"/>
        <end position="138"/>
    </location>
</feature>
<feature type="disulfide bond" evidence="1">
    <location>
        <begin position="66"/>
        <end position="104"/>
    </location>
</feature>
<feature type="disulfide bond" evidence="1">
    <location>
        <begin position="73"/>
        <end position="97"/>
    </location>
</feature>
<feature type="disulfide bond" evidence="1">
    <location>
        <begin position="91"/>
        <end position="102"/>
    </location>
</feature>